<organism>
    <name type="scientific">Mycobacterium bovis (strain BCG / Pasteur 1173P2)</name>
    <dbReference type="NCBI Taxonomy" id="410289"/>
    <lineage>
        <taxon>Bacteria</taxon>
        <taxon>Bacillati</taxon>
        <taxon>Actinomycetota</taxon>
        <taxon>Actinomycetes</taxon>
        <taxon>Mycobacteriales</taxon>
        <taxon>Mycobacteriaceae</taxon>
        <taxon>Mycobacterium</taxon>
        <taxon>Mycobacterium tuberculosis complex</taxon>
    </lineage>
</organism>
<accession>A1KJD0</accession>
<sequence length="463" mass="49958">MTQDGTWVDESDWQLDDSEIAESGAAPVVAVVGRPNVGKSTLVNRILGRREAVVQDIPGVTRDRVCYDALWTGRRFVVQDTGGWEPNAKGLQRLVAEQASVAMRTADAVILVVDAGVGATAADEAAARILLRSGKPVFLAANKVDSEKGESDAAALWSLGLGEPHAISAMHGRGVADLLDGVLAALPEVGESASASGGPRRVALVGKPNVGKSSLLNKLAGDQRSVVHEAAGTTVDPVDSLIELGGDVWRFVDTAGLRRKVGQASGHEFYASVRTHAAIDSAEVAIVLIDASQPLTEQDLRVISMVIEAGRALVLAYNKWDLVDEDRRELLQREIDRELVQVRWAQRVNISAKTGRAVHKLVPAMEDALASWDTRIATGPLNTWLTEVTAATPPPVRGGKQPRILFATQATARPPTFVLFTTGFLEAGYRRFLERRLRETFGFDGSPIRVNVRVREKRAGKRR</sequence>
<dbReference type="EMBL" id="AM408590">
    <property type="protein sequence ID" value="CAL71739.1"/>
    <property type="molecule type" value="Genomic_DNA"/>
</dbReference>
<dbReference type="RefSeq" id="WP_003898984.1">
    <property type="nucleotide sequence ID" value="NC_008769.1"/>
</dbReference>
<dbReference type="SMR" id="A1KJD0"/>
<dbReference type="GeneID" id="45425684"/>
<dbReference type="KEGG" id="mbb:BCG_1752"/>
<dbReference type="HOGENOM" id="CLU_016077_6_2_11"/>
<dbReference type="Proteomes" id="UP000001472">
    <property type="component" value="Chromosome"/>
</dbReference>
<dbReference type="GO" id="GO:0016887">
    <property type="term" value="F:ATP hydrolysis activity"/>
    <property type="evidence" value="ECO:0007669"/>
    <property type="project" value="InterPro"/>
</dbReference>
<dbReference type="GO" id="GO:0005525">
    <property type="term" value="F:GTP binding"/>
    <property type="evidence" value="ECO:0007669"/>
    <property type="project" value="UniProtKB-UniRule"/>
</dbReference>
<dbReference type="GO" id="GO:0043022">
    <property type="term" value="F:ribosome binding"/>
    <property type="evidence" value="ECO:0007669"/>
    <property type="project" value="TreeGrafter"/>
</dbReference>
<dbReference type="GO" id="GO:0042254">
    <property type="term" value="P:ribosome biogenesis"/>
    <property type="evidence" value="ECO:0007669"/>
    <property type="project" value="UniProtKB-KW"/>
</dbReference>
<dbReference type="CDD" id="cd01894">
    <property type="entry name" value="EngA1"/>
    <property type="match status" value="1"/>
</dbReference>
<dbReference type="CDD" id="cd01895">
    <property type="entry name" value="EngA2"/>
    <property type="match status" value="1"/>
</dbReference>
<dbReference type="FunFam" id="3.30.300.20:FF:000004">
    <property type="entry name" value="GTPase Der"/>
    <property type="match status" value="1"/>
</dbReference>
<dbReference type="FunFam" id="3.40.50.300:FF:000040">
    <property type="entry name" value="GTPase Der"/>
    <property type="match status" value="1"/>
</dbReference>
<dbReference type="FunFam" id="3.40.50.300:FF:000057">
    <property type="entry name" value="GTPase Der"/>
    <property type="match status" value="1"/>
</dbReference>
<dbReference type="Gene3D" id="3.30.300.20">
    <property type="match status" value="1"/>
</dbReference>
<dbReference type="Gene3D" id="3.40.50.300">
    <property type="entry name" value="P-loop containing nucleotide triphosphate hydrolases"/>
    <property type="match status" value="2"/>
</dbReference>
<dbReference type="HAMAP" id="MF_00195">
    <property type="entry name" value="GTPase_Der"/>
    <property type="match status" value="1"/>
</dbReference>
<dbReference type="InterPro" id="IPR003593">
    <property type="entry name" value="AAA+_ATPase"/>
</dbReference>
<dbReference type="InterPro" id="IPR031166">
    <property type="entry name" value="G_ENGA"/>
</dbReference>
<dbReference type="InterPro" id="IPR006073">
    <property type="entry name" value="GTP-bd"/>
</dbReference>
<dbReference type="InterPro" id="IPR016484">
    <property type="entry name" value="GTPase_Der"/>
</dbReference>
<dbReference type="InterPro" id="IPR032859">
    <property type="entry name" value="KH_dom-like"/>
</dbReference>
<dbReference type="InterPro" id="IPR015946">
    <property type="entry name" value="KH_dom-like_a/b"/>
</dbReference>
<dbReference type="InterPro" id="IPR027417">
    <property type="entry name" value="P-loop_NTPase"/>
</dbReference>
<dbReference type="InterPro" id="IPR005225">
    <property type="entry name" value="Small_GTP-bd"/>
</dbReference>
<dbReference type="NCBIfam" id="TIGR03594">
    <property type="entry name" value="GTPase_EngA"/>
    <property type="match status" value="1"/>
</dbReference>
<dbReference type="NCBIfam" id="NF002828">
    <property type="entry name" value="PRK03003.1"/>
    <property type="match status" value="1"/>
</dbReference>
<dbReference type="NCBIfam" id="TIGR00231">
    <property type="entry name" value="small_GTP"/>
    <property type="match status" value="2"/>
</dbReference>
<dbReference type="PANTHER" id="PTHR43834">
    <property type="entry name" value="GTPASE DER"/>
    <property type="match status" value="1"/>
</dbReference>
<dbReference type="PANTHER" id="PTHR43834:SF6">
    <property type="entry name" value="GTPASE DER"/>
    <property type="match status" value="1"/>
</dbReference>
<dbReference type="Pfam" id="PF14714">
    <property type="entry name" value="KH_dom-like"/>
    <property type="match status" value="1"/>
</dbReference>
<dbReference type="Pfam" id="PF01926">
    <property type="entry name" value="MMR_HSR1"/>
    <property type="match status" value="2"/>
</dbReference>
<dbReference type="PIRSF" id="PIRSF006485">
    <property type="entry name" value="GTP-binding_EngA"/>
    <property type="match status" value="1"/>
</dbReference>
<dbReference type="PRINTS" id="PR00326">
    <property type="entry name" value="GTP1OBG"/>
</dbReference>
<dbReference type="SMART" id="SM00382">
    <property type="entry name" value="AAA"/>
    <property type="match status" value="2"/>
</dbReference>
<dbReference type="SUPFAM" id="SSF52540">
    <property type="entry name" value="P-loop containing nucleoside triphosphate hydrolases"/>
    <property type="match status" value="2"/>
</dbReference>
<dbReference type="PROSITE" id="PS51712">
    <property type="entry name" value="G_ENGA"/>
    <property type="match status" value="2"/>
</dbReference>
<keyword id="KW-0342">GTP-binding</keyword>
<keyword id="KW-0547">Nucleotide-binding</keyword>
<keyword id="KW-0677">Repeat</keyword>
<keyword id="KW-0690">Ribosome biogenesis</keyword>
<proteinExistence type="inferred from homology"/>
<gene>
    <name evidence="1" type="primary">der</name>
    <name type="synonym">engA</name>
    <name type="ordered locus">BCG_1752</name>
</gene>
<evidence type="ECO:0000255" key="1">
    <source>
        <dbReference type="HAMAP-Rule" id="MF_00195"/>
    </source>
</evidence>
<reference key="1">
    <citation type="journal article" date="2007" name="Proc. Natl. Acad. Sci. U.S.A.">
        <title>Genome plasticity of BCG and impact on vaccine efficacy.</title>
        <authorList>
            <person name="Brosch R."/>
            <person name="Gordon S.V."/>
            <person name="Garnier T."/>
            <person name="Eiglmeier K."/>
            <person name="Frigui W."/>
            <person name="Valenti P."/>
            <person name="Dos Santos S."/>
            <person name="Duthoy S."/>
            <person name="Lacroix C."/>
            <person name="Garcia-Pelayo C."/>
            <person name="Inwald J.K."/>
            <person name="Golby P."/>
            <person name="Garcia J.N."/>
            <person name="Hewinson R.G."/>
            <person name="Behr M.A."/>
            <person name="Quail M.A."/>
            <person name="Churcher C."/>
            <person name="Barrell B.G."/>
            <person name="Parkhill J."/>
            <person name="Cole S.T."/>
        </authorList>
    </citation>
    <scope>NUCLEOTIDE SEQUENCE [LARGE SCALE GENOMIC DNA]</scope>
    <source>
        <strain>BCG / Pasteur 1173P2</strain>
    </source>
</reference>
<comment type="function">
    <text evidence="1">GTPase that plays an essential role in the late steps of ribosome biogenesis.</text>
</comment>
<comment type="subunit">
    <text evidence="1">Associates with the 50S ribosomal subunit.</text>
</comment>
<comment type="similarity">
    <text evidence="1">Belongs to the TRAFAC class TrmE-Era-EngA-EngB-Septin-like GTPase superfamily. EngA (Der) GTPase family.</text>
</comment>
<name>DER_MYCBP</name>
<protein>
    <recommendedName>
        <fullName evidence="1">GTPase Der</fullName>
    </recommendedName>
    <alternativeName>
        <fullName evidence="1">GTP-binding protein EngA</fullName>
    </alternativeName>
</protein>
<feature type="chain" id="PRO_1000011668" description="GTPase Der">
    <location>
        <begin position="1"/>
        <end position="463"/>
    </location>
</feature>
<feature type="domain" description="EngA-type G 1">
    <location>
        <begin position="27"/>
        <end position="190"/>
    </location>
</feature>
<feature type="domain" description="EngA-type G 2">
    <location>
        <begin position="200"/>
        <end position="373"/>
    </location>
</feature>
<feature type="domain" description="KH-like" evidence="1">
    <location>
        <begin position="374"/>
        <end position="456"/>
    </location>
</feature>
<feature type="binding site" evidence="1">
    <location>
        <begin position="33"/>
        <end position="40"/>
    </location>
    <ligand>
        <name>GTP</name>
        <dbReference type="ChEBI" id="CHEBI:37565"/>
        <label>1</label>
    </ligand>
</feature>
<feature type="binding site" evidence="1">
    <location>
        <begin position="80"/>
        <end position="84"/>
    </location>
    <ligand>
        <name>GTP</name>
        <dbReference type="ChEBI" id="CHEBI:37565"/>
        <label>1</label>
    </ligand>
</feature>
<feature type="binding site" evidence="1">
    <location>
        <begin position="142"/>
        <end position="145"/>
    </location>
    <ligand>
        <name>GTP</name>
        <dbReference type="ChEBI" id="CHEBI:37565"/>
        <label>1</label>
    </ligand>
</feature>
<feature type="binding site" evidence="1">
    <location>
        <begin position="206"/>
        <end position="213"/>
    </location>
    <ligand>
        <name>GTP</name>
        <dbReference type="ChEBI" id="CHEBI:37565"/>
        <label>2</label>
    </ligand>
</feature>
<feature type="binding site" evidence="1">
    <location>
        <begin position="253"/>
        <end position="257"/>
    </location>
    <ligand>
        <name>GTP</name>
        <dbReference type="ChEBI" id="CHEBI:37565"/>
        <label>2</label>
    </ligand>
</feature>
<feature type="binding site" evidence="1">
    <location>
        <begin position="318"/>
        <end position="321"/>
    </location>
    <ligand>
        <name>GTP</name>
        <dbReference type="ChEBI" id="CHEBI:37565"/>
        <label>2</label>
    </ligand>
</feature>